<evidence type="ECO:0000255" key="1">
    <source>
        <dbReference type="HAMAP-Rule" id="MF_00285"/>
    </source>
</evidence>
<name>KDPB_ESCF3</name>
<comment type="function">
    <text evidence="1">Part of the high-affinity ATP-driven potassium transport (or Kdp) system, which catalyzes the hydrolysis of ATP coupled with the electrogenic transport of potassium into the cytoplasm. This subunit is responsible for energy coupling to the transport system and for the release of the potassium ions to the cytoplasm.</text>
</comment>
<comment type="catalytic activity">
    <reaction evidence="1">
        <text>K(+)(out) + ATP + H2O = K(+)(in) + ADP + phosphate + H(+)</text>
        <dbReference type="Rhea" id="RHEA:16777"/>
        <dbReference type="ChEBI" id="CHEBI:15377"/>
        <dbReference type="ChEBI" id="CHEBI:15378"/>
        <dbReference type="ChEBI" id="CHEBI:29103"/>
        <dbReference type="ChEBI" id="CHEBI:30616"/>
        <dbReference type="ChEBI" id="CHEBI:43474"/>
        <dbReference type="ChEBI" id="CHEBI:456216"/>
        <dbReference type="EC" id="7.2.2.6"/>
    </reaction>
    <physiologicalReaction direction="left-to-right" evidence="1">
        <dbReference type="Rhea" id="RHEA:16778"/>
    </physiologicalReaction>
</comment>
<comment type="subunit">
    <text evidence="1">The system is composed of three essential subunits: KdpA, KdpB and KdpC.</text>
</comment>
<comment type="subcellular location">
    <subcellularLocation>
        <location evidence="1">Cell inner membrane</location>
        <topology evidence="1">Multi-pass membrane protein</topology>
    </subcellularLocation>
</comment>
<comment type="similarity">
    <text evidence="1">Belongs to the cation transport ATPase (P-type) (TC 3.A.3) family. Type IA subfamily.</text>
</comment>
<reference key="1">
    <citation type="journal article" date="2009" name="PLoS Genet.">
        <title>Organised genome dynamics in the Escherichia coli species results in highly diverse adaptive paths.</title>
        <authorList>
            <person name="Touchon M."/>
            <person name="Hoede C."/>
            <person name="Tenaillon O."/>
            <person name="Barbe V."/>
            <person name="Baeriswyl S."/>
            <person name="Bidet P."/>
            <person name="Bingen E."/>
            <person name="Bonacorsi S."/>
            <person name="Bouchier C."/>
            <person name="Bouvet O."/>
            <person name="Calteau A."/>
            <person name="Chiapello H."/>
            <person name="Clermont O."/>
            <person name="Cruveiller S."/>
            <person name="Danchin A."/>
            <person name="Diard M."/>
            <person name="Dossat C."/>
            <person name="Karoui M.E."/>
            <person name="Frapy E."/>
            <person name="Garry L."/>
            <person name="Ghigo J.M."/>
            <person name="Gilles A.M."/>
            <person name="Johnson J."/>
            <person name="Le Bouguenec C."/>
            <person name="Lescat M."/>
            <person name="Mangenot S."/>
            <person name="Martinez-Jehanne V."/>
            <person name="Matic I."/>
            <person name="Nassif X."/>
            <person name="Oztas S."/>
            <person name="Petit M.A."/>
            <person name="Pichon C."/>
            <person name="Rouy Z."/>
            <person name="Ruf C.S."/>
            <person name="Schneider D."/>
            <person name="Tourret J."/>
            <person name="Vacherie B."/>
            <person name="Vallenet D."/>
            <person name="Medigue C."/>
            <person name="Rocha E.P.C."/>
            <person name="Denamur E."/>
        </authorList>
    </citation>
    <scope>NUCLEOTIDE SEQUENCE [LARGE SCALE GENOMIC DNA]</scope>
    <source>
        <strain>ATCC 35469 / DSM 13698 / BCRC 15582 / CCUG 18766 / IAM 14443 / JCM 21226 / LMG 7866 / NBRC 102419 / NCTC 12128 / CDC 0568-73</strain>
    </source>
</reference>
<keyword id="KW-0067">ATP-binding</keyword>
<keyword id="KW-0997">Cell inner membrane</keyword>
<keyword id="KW-1003">Cell membrane</keyword>
<keyword id="KW-0406">Ion transport</keyword>
<keyword id="KW-0460">Magnesium</keyword>
<keyword id="KW-0472">Membrane</keyword>
<keyword id="KW-0479">Metal-binding</keyword>
<keyword id="KW-0547">Nucleotide-binding</keyword>
<keyword id="KW-0597">Phosphoprotein</keyword>
<keyword id="KW-0630">Potassium</keyword>
<keyword id="KW-0633">Potassium transport</keyword>
<keyword id="KW-1278">Translocase</keyword>
<keyword id="KW-0812">Transmembrane</keyword>
<keyword id="KW-1133">Transmembrane helix</keyword>
<keyword id="KW-0813">Transport</keyword>
<protein>
    <recommendedName>
        <fullName evidence="1">Potassium-transporting ATPase ATP-binding subunit</fullName>
        <ecNumber evidence="1">7.2.2.6</ecNumber>
    </recommendedName>
    <alternativeName>
        <fullName evidence="1">ATP phosphohydrolase [potassium-transporting] B chain</fullName>
    </alternativeName>
    <alternativeName>
        <fullName evidence="1">Potassium-binding and translocating subunit B</fullName>
    </alternativeName>
    <alternativeName>
        <fullName evidence="1">Potassium-translocating ATPase B chain</fullName>
    </alternativeName>
</protein>
<sequence>MSRKQLALFEPTLVVQALKEAVKKLNPQAQWRNPVMFIVWIGSLLTTCISIAMASGAMPGNALFSAAISGWLWVTVLFANFAEALAEGRSKAQANSLKGVKKTAFARKLREPKYGAAADKVPADQLRKGDIVLVEAGDIIPCDGEVIEGGASVDESAITGESAPVIRESGGDFASVTGGTRILSDWLVIECSVNPGETFLDRMIAMVEGAQRRKTPNEIALTILLIALTIVFLLATATLWPFSAWGGNAVSVTVLVALLVCLIPTTIGGLLSAIGVAGMSRMLGTNVIATSGRAVEAAGDVDVLLLDKTGTITLGNRQASEFIPAQGVEEKTLADAAQLASLADETPEGRSIVILAKQRFNLRERDVQSLHATFVPFTAQSRMSGINIDNRMIRKGSVDAIRRHIEANGGHFPADVDQKVDQVARQGATPLVVVEGSRVLGVIALKDIVKGGIKERFAQLRQMGIKTVMITGDNRLTAAAIAAEAGVDDFLAEATPEAKLALIRQYQAEGRLVAMTGDGTNDAPALAQADVAVAMNSGTQAAKEAGNMVDLDSNPTKLIEVVHIGKQMLMTRGSLTTFSIANDVAKYFAIIPAAFAATYPQLNALNIMRLHSPDSAILSAVIFNALIIVFLIPLALKGVSYKPLTASAMLRRNLWIYGLGGLLVPFIGIKVIDLLLTVCGLV</sequence>
<proteinExistence type="inferred from homology"/>
<dbReference type="EC" id="7.2.2.6" evidence="1"/>
<dbReference type="EMBL" id="CU928158">
    <property type="protein sequence ID" value="CAQ89912.1"/>
    <property type="molecule type" value="Genomic_DNA"/>
</dbReference>
<dbReference type="RefSeq" id="WP_000087975.1">
    <property type="nucleotide sequence ID" value="NC_011740.1"/>
</dbReference>
<dbReference type="SMR" id="B7LKR7"/>
<dbReference type="GeneID" id="75056554"/>
<dbReference type="KEGG" id="efe:EFER_2413"/>
<dbReference type="HOGENOM" id="CLU_025728_2_0_6"/>
<dbReference type="OrthoDB" id="9814270at2"/>
<dbReference type="Proteomes" id="UP000000745">
    <property type="component" value="Chromosome"/>
</dbReference>
<dbReference type="GO" id="GO:0005886">
    <property type="term" value="C:plasma membrane"/>
    <property type="evidence" value="ECO:0007669"/>
    <property type="project" value="UniProtKB-SubCell"/>
</dbReference>
<dbReference type="GO" id="GO:0005524">
    <property type="term" value="F:ATP binding"/>
    <property type="evidence" value="ECO:0007669"/>
    <property type="project" value="UniProtKB-UniRule"/>
</dbReference>
<dbReference type="GO" id="GO:0016887">
    <property type="term" value="F:ATP hydrolysis activity"/>
    <property type="evidence" value="ECO:0007669"/>
    <property type="project" value="InterPro"/>
</dbReference>
<dbReference type="GO" id="GO:0000287">
    <property type="term" value="F:magnesium ion binding"/>
    <property type="evidence" value="ECO:0007669"/>
    <property type="project" value="UniProtKB-UniRule"/>
</dbReference>
<dbReference type="GO" id="GO:0008556">
    <property type="term" value="F:P-type potassium transmembrane transporter activity"/>
    <property type="evidence" value="ECO:0007669"/>
    <property type="project" value="UniProtKB-UniRule"/>
</dbReference>
<dbReference type="CDD" id="cd02078">
    <property type="entry name" value="P-type_ATPase_K"/>
    <property type="match status" value="1"/>
</dbReference>
<dbReference type="FunFam" id="2.70.150.10:FF:000010">
    <property type="entry name" value="Potassium-transporting ATPase ATP-binding subunit"/>
    <property type="match status" value="1"/>
</dbReference>
<dbReference type="FunFam" id="3.40.1110.10:FF:000007">
    <property type="entry name" value="Potassium-transporting ATPase ATP-binding subunit"/>
    <property type="match status" value="1"/>
</dbReference>
<dbReference type="Gene3D" id="3.40.1110.10">
    <property type="entry name" value="Calcium-transporting ATPase, cytoplasmic domain N"/>
    <property type="match status" value="1"/>
</dbReference>
<dbReference type="Gene3D" id="2.70.150.10">
    <property type="entry name" value="Calcium-transporting ATPase, cytoplasmic transduction domain A"/>
    <property type="match status" value="1"/>
</dbReference>
<dbReference type="Gene3D" id="3.40.50.1000">
    <property type="entry name" value="HAD superfamily/HAD-like"/>
    <property type="match status" value="1"/>
</dbReference>
<dbReference type="HAMAP" id="MF_00285">
    <property type="entry name" value="KdpB"/>
    <property type="match status" value="1"/>
</dbReference>
<dbReference type="InterPro" id="IPR023299">
    <property type="entry name" value="ATPase_P-typ_cyto_dom_N"/>
</dbReference>
<dbReference type="InterPro" id="IPR018303">
    <property type="entry name" value="ATPase_P-typ_P_site"/>
</dbReference>
<dbReference type="InterPro" id="IPR023298">
    <property type="entry name" value="ATPase_P-typ_TM_dom_sf"/>
</dbReference>
<dbReference type="InterPro" id="IPR008250">
    <property type="entry name" value="ATPase_P-typ_transduc_dom_A_sf"/>
</dbReference>
<dbReference type="InterPro" id="IPR036412">
    <property type="entry name" value="HAD-like_sf"/>
</dbReference>
<dbReference type="InterPro" id="IPR023214">
    <property type="entry name" value="HAD_sf"/>
</dbReference>
<dbReference type="InterPro" id="IPR006391">
    <property type="entry name" value="P-type_ATPase_bsu_IA"/>
</dbReference>
<dbReference type="InterPro" id="IPR001757">
    <property type="entry name" value="P_typ_ATPase"/>
</dbReference>
<dbReference type="InterPro" id="IPR044492">
    <property type="entry name" value="P_typ_ATPase_HD_dom"/>
</dbReference>
<dbReference type="NCBIfam" id="TIGR01494">
    <property type="entry name" value="ATPase_P-type"/>
    <property type="match status" value="2"/>
</dbReference>
<dbReference type="NCBIfam" id="TIGR01497">
    <property type="entry name" value="kdpB"/>
    <property type="match status" value="1"/>
</dbReference>
<dbReference type="PANTHER" id="PTHR43743">
    <property type="entry name" value="POTASSIUM-TRANSPORTING ATPASE ATP-BINDING SUBUNIT"/>
    <property type="match status" value="1"/>
</dbReference>
<dbReference type="PANTHER" id="PTHR43743:SF1">
    <property type="entry name" value="POTASSIUM-TRANSPORTING ATPASE ATP-BINDING SUBUNIT"/>
    <property type="match status" value="1"/>
</dbReference>
<dbReference type="Pfam" id="PF00122">
    <property type="entry name" value="E1-E2_ATPase"/>
    <property type="match status" value="1"/>
</dbReference>
<dbReference type="Pfam" id="PF00702">
    <property type="entry name" value="Hydrolase"/>
    <property type="match status" value="1"/>
</dbReference>
<dbReference type="PRINTS" id="PR00119">
    <property type="entry name" value="CATATPASE"/>
</dbReference>
<dbReference type="SFLD" id="SFLDG00002">
    <property type="entry name" value="C1.7:_P-type_atpase_like"/>
    <property type="match status" value="1"/>
</dbReference>
<dbReference type="SFLD" id="SFLDF00027">
    <property type="entry name" value="p-type_atpase"/>
    <property type="match status" value="1"/>
</dbReference>
<dbReference type="SUPFAM" id="SSF81653">
    <property type="entry name" value="Calcium ATPase, transduction domain A"/>
    <property type="match status" value="1"/>
</dbReference>
<dbReference type="SUPFAM" id="SSF81665">
    <property type="entry name" value="Calcium ATPase, transmembrane domain M"/>
    <property type="match status" value="1"/>
</dbReference>
<dbReference type="SUPFAM" id="SSF56784">
    <property type="entry name" value="HAD-like"/>
    <property type="match status" value="1"/>
</dbReference>
<dbReference type="SUPFAM" id="SSF81660">
    <property type="entry name" value="Metal cation-transporting ATPase, ATP-binding domain N"/>
    <property type="match status" value="1"/>
</dbReference>
<dbReference type="PROSITE" id="PS00154">
    <property type="entry name" value="ATPASE_E1_E2"/>
    <property type="match status" value="1"/>
</dbReference>
<gene>
    <name evidence="1" type="primary">kdpB</name>
    <name type="ordered locus">EFER_2413</name>
</gene>
<accession>B7LKR7</accession>
<organism>
    <name type="scientific">Escherichia fergusonii (strain ATCC 35469 / DSM 13698 / CCUG 18766 / IAM 14443 / JCM 21226 / LMG 7866 / NBRC 102419 / NCTC 12128 / CDC 0568-73)</name>
    <dbReference type="NCBI Taxonomy" id="585054"/>
    <lineage>
        <taxon>Bacteria</taxon>
        <taxon>Pseudomonadati</taxon>
        <taxon>Pseudomonadota</taxon>
        <taxon>Gammaproteobacteria</taxon>
        <taxon>Enterobacterales</taxon>
        <taxon>Enterobacteriaceae</taxon>
        <taxon>Escherichia</taxon>
    </lineage>
</organism>
<feature type="chain" id="PRO_1000119413" description="Potassium-transporting ATPase ATP-binding subunit">
    <location>
        <begin position="1"/>
        <end position="682"/>
    </location>
</feature>
<feature type="transmembrane region" description="Helical" evidence="1">
    <location>
        <begin position="34"/>
        <end position="54"/>
    </location>
</feature>
<feature type="transmembrane region" description="Helical" evidence="1">
    <location>
        <begin position="62"/>
        <end position="82"/>
    </location>
</feature>
<feature type="transmembrane region" description="Helical" evidence="1">
    <location>
        <begin position="219"/>
        <end position="239"/>
    </location>
</feature>
<feature type="transmembrane region" description="Helical" evidence="1">
    <location>
        <begin position="254"/>
        <end position="274"/>
    </location>
</feature>
<feature type="transmembrane region" description="Helical" evidence="1">
    <location>
        <begin position="588"/>
        <end position="608"/>
    </location>
</feature>
<feature type="transmembrane region" description="Helical" evidence="1">
    <location>
        <begin position="616"/>
        <end position="636"/>
    </location>
</feature>
<feature type="transmembrane region" description="Helical" evidence="1">
    <location>
        <begin position="656"/>
        <end position="676"/>
    </location>
</feature>
<feature type="active site" description="4-aspartylphosphate intermediate" evidence="1">
    <location>
        <position position="307"/>
    </location>
</feature>
<feature type="binding site" evidence="1">
    <location>
        <position position="344"/>
    </location>
    <ligand>
        <name>ATP</name>
        <dbReference type="ChEBI" id="CHEBI:30616"/>
    </ligand>
</feature>
<feature type="binding site" evidence="1">
    <location>
        <position position="348"/>
    </location>
    <ligand>
        <name>ATP</name>
        <dbReference type="ChEBI" id="CHEBI:30616"/>
    </ligand>
</feature>
<feature type="binding site" evidence="1">
    <location>
        <begin position="377"/>
        <end position="384"/>
    </location>
    <ligand>
        <name>ATP</name>
        <dbReference type="ChEBI" id="CHEBI:30616"/>
    </ligand>
</feature>
<feature type="binding site" evidence="1">
    <location>
        <position position="395"/>
    </location>
    <ligand>
        <name>ATP</name>
        <dbReference type="ChEBI" id="CHEBI:30616"/>
    </ligand>
</feature>
<feature type="binding site" evidence="1">
    <location>
        <position position="518"/>
    </location>
    <ligand>
        <name>Mg(2+)</name>
        <dbReference type="ChEBI" id="CHEBI:18420"/>
    </ligand>
</feature>
<feature type="binding site" evidence="1">
    <location>
        <position position="522"/>
    </location>
    <ligand>
        <name>Mg(2+)</name>
        <dbReference type="ChEBI" id="CHEBI:18420"/>
    </ligand>
</feature>